<accession>Q2RQW4</accession>
<sequence length="92" mass="10481">MARSVWKGPFIDGYLLNKAEKARSSGRNEVIKIWSRRSTIMPQFVGLTFGVYNGQKFVPVLVTEQMVGHKFGEFAPTRTYYGHAADKKAKRK</sequence>
<dbReference type="EMBL" id="CP000230">
    <property type="protein sequence ID" value="ABC23481.1"/>
    <property type="molecule type" value="Genomic_DNA"/>
</dbReference>
<dbReference type="RefSeq" id="WP_011390434.1">
    <property type="nucleotide sequence ID" value="NC_007643.1"/>
</dbReference>
<dbReference type="RefSeq" id="YP_427768.1">
    <property type="nucleotide sequence ID" value="NC_007643.1"/>
</dbReference>
<dbReference type="SMR" id="Q2RQW4"/>
<dbReference type="STRING" id="269796.Rru_A2684"/>
<dbReference type="EnsemblBacteria" id="ABC23481">
    <property type="protein sequence ID" value="ABC23481"/>
    <property type="gene ID" value="Rru_A2684"/>
</dbReference>
<dbReference type="KEGG" id="rru:Rru_A2684"/>
<dbReference type="PATRIC" id="fig|269796.9.peg.2791"/>
<dbReference type="eggNOG" id="COG0185">
    <property type="taxonomic scope" value="Bacteria"/>
</dbReference>
<dbReference type="HOGENOM" id="CLU_144911_0_1_5"/>
<dbReference type="PhylomeDB" id="Q2RQW4"/>
<dbReference type="Proteomes" id="UP000001929">
    <property type="component" value="Chromosome"/>
</dbReference>
<dbReference type="GO" id="GO:0005737">
    <property type="term" value="C:cytoplasm"/>
    <property type="evidence" value="ECO:0007669"/>
    <property type="project" value="UniProtKB-ARBA"/>
</dbReference>
<dbReference type="GO" id="GO:0015935">
    <property type="term" value="C:small ribosomal subunit"/>
    <property type="evidence" value="ECO:0007669"/>
    <property type="project" value="InterPro"/>
</dbReference>
<dbReference type="GO" id="GO:0019843">
    <property type="term" value="F:rRNA binding"/>
    <property type="evidence" value="ECO:0007669"/>
    <property type="project" value="UniProtKB-UniRule"/>
</dbReference>
<dbReference type="GO" id="GO:0003735">
    <property type="term" value="F:structural constituent of ribosome"/>
    <property type="evidence" value="ECO:0007669"/>
    <property type="project" value="InterPro"/>
</dbReference>
<dbReference type="GO" id="GO:0000028">
    <property type="term" value="P:ribosomal small subunit assembly"/>
    <property type="evidence" value="ECO:0007669"/>
    <property type="project" value="TreeGrafter"/>
</dbReference>
<dbReference type="GO" id="GO:0006412">
    <property type="term" value="P:translation"/>
    <property type="evidence" value="ECO:0007669"/>
    <property type="project" value="UniProtKB-UniRule"/>
</dbReference>
<dbReference type="FunFam" id="3.30.860.10:FF:000001">
    <property type="entry name" value="30S ribosomal protein S19"/>
    <property type="match status" value="1"/>
</dbReference>
<dbReference type="Gene3D" id="3.30.860.10">
    <property type="entry name" value="30s Ribosomal Protein S19, Chain A"/>
    <property type="match status" value="1"/>
</dbReference>
<dbReference type="HAMAP" id="MF_00531">
    <property type="entry name" value="Ribosomal_uS19"/>
    <property type="match status" value="1"/>
</dbReference>
<dbReference type="InterPro" id="IPR002222">
    <property type="entry name" value="Ribosomal_uS19"/>
</dbReference>
<dbReference type="InterPro" id="IPR005732">
    <property type="entry name" value="Ribosomal_uS19_bac-type"/>
</dbReference>
<dbReference type="InterPro" id="IPR020934">
    <property type="entry name" value="Ribosomal_uS19_CS"/>
</dbReference>
<dbReference type="InterPro" id="IPR023575">
    <property type="entry name" value="Ribosomal_uS19_SF"/>
</dbReference>
<dbReference type="NCBIfam" id="TIGR01050">
    <property type="entry name" value="rpsS_bact"/>
    <property type="match status" value="1"/>
</dbReference>
<dbReference type="PANTHER" id="PTHR11880">
    <property type="entry name" value="RIBOSOMAL PROTEIN S19P FAMILY MEMBER"/>
    <property type="match status" value="1"/>
</dbReference>
<dbReference type="PANTHER" id="PTHR11880:SF8">
    <property type="entry name" value="SMALL RIBOSOMAL SUBUNIT PROTEIN US19M"/>
    <property type="match status" value="1"/>
</dbReference>
<dbReference type="Pfam" id="PF00203">
    <property type="entry name" value="Ribosomal_S19"/>
    <property type="match status" value="1"/>
</dbReference>
<dbReference type="PIRSF" id="PIRSF002144">
    <property type="entry name" value="Ribosomal_S19"/>
    <property type="match status" value="1"/>
</dbReference>
<dbReference type="PRINTS" id="PR00975">
    <property type="entry name" value="RIBOSOMALS19"/>
</dbReference>
<dbReference type="SUPFAM" id="SSF54570">
    <property type="entry name" value="Ribosomal protein S19"/>
    <property type="match status" value="1"/>
</dbReference>
<dbReference type="PROSITE" id="PS00323">
    <property type="entry name" value="RIBOSOMAL_S19"/>
    <property type="match status" value="1"/>
</dbReference>
<evidence type="ECO:0000255" key="1">
    <source>
        <dbReference type="HAMAP-Rule" id="MF_00531"/>
    </source>
</evidence>
<evidence type="ECO:0000305" key="2"/>
<comment type="function">
    <text evidence="1">Protein S19 forms a complex with S13 that binds strongly to the 16S ribosomal RNA.</text>
</comment>
<comment type="similarity">
    <text evidence="1">Belongs to the universal ribosomal protein uS19 family.</text>
</comment>
<name>RS19_RHORT</name>
<protein>
    <recommendedName>
        <fullName evidence="1">Small ribosomal subunit protein uS19</fullName>
    </recommendedName>
    <alternativeName>
        <fullName evidence="2">30S ribosomal protein S19</fullName>
    </alternativeName>
</protein>
<reference key="1">
    <citation type="journal article" date="2011" name="Stand. Genomic Sci.">
        <title>Complete genome sequence of Rhodospirillum rubrum type strain (S1).</title>
        <authorList>
            <person name="Munk A.C."/>
            <person name="Copeland A."/>
            <person name="Lucas S."/>
            <person name="Lapidus A."/>
            <person name="Del Rio T.G."/>
            <person name="Barry K."/>
            <person name="Detter J.C."/>
            <person name="Hammon N."/>
            <person name="Israni S."/>
            <person name="Pitluck S."/>
            <person name="Brettin T."/>
            <person name="Bruce D."/>
            <person name="Han C."/>
            <person name="Tapia R."/>
            <person name="Gilna P."/>
            <person name="Schmutz J."/>
            <person name="Larimer F."/>
            <person name="Land M."/>
            <person name="Kyrpides N.C."/>
            <person name="Mavromatis K."/>
            <person name="Richardson P."/>
            <person name="Rohde M."/>
            <person name="Goeker M."/>
            <person name="Klenk H.P."/>
            <person name="Zhang Y."/>
            <person name="Roberts G.P."/>
            <person name="Reslewic S."/>
            <person name="Schwartz D.C."/>
        </authorList>
    </citation>
    <scope>NUCLEOTIDE SEQUENCE [LARGE SCALE GENOMIC DNA]</scope>
    <source>
        <strain>ATCC 11170 / ATH 1.1.1 / DSM 467 / LMG 4362 / NCIMB 8255 / S1</strain>
    </source>
</reference>
<proteinExistence type="inferred from homology"/>
<keyword id="KW-1185">Reference proteome</keyword>
<keyword id="KW-0687">Ribonucleoprotein</keyword>
<keyword id="KW-0689">Ribosomal protein</keyword>
<keyword id="KW-0694">RNA-binding</keyword>
<keyword id="KW-0699">rRNA-binding</keyword>
<feature type="chain" id="PRO_0000265418" description="Small ribosomal subunit protein uS19">
    <location>
        <begin position="1"/>
        <end position="92"/>
    </location>
</feature>
<gene>
    <name evidence="1" type="primary">rpsS</name>
    <name type="ordered locus">Rru_A2684</name>
</gene>
<organism>
    <name type="scientific">Rhodospirillum rubrum (strain ATCC 11170 / ATH 1.1.1 / DSM 467 / LMG 4362 / NCIMB 8255 / S1)</name>
    <dbReference type="NCBI Taxonomy" id="269796"/>
    <lineage>
        <taxon>Bacteria</taxon>
        <taxon>Pseudomonadati</taxon>
        <taxon>Pseudomonadota</taxon>
        <taxon>Alphaproteobacteria</taxon>
        <taxon>Rhodospirillales</taxon>
        <taxon>Rhodospirillaceae</taxon>
        <taxon>Rhodospirillum</taxon>
    </lineage>
</organism>